<sequence>MQKTNPGLQRLFQIPTFTLSNSDLTCEMKVKIADTARYSLKQNPNQDKAEVIERCRIAVYAEFFVADWLSGYVNKGQEDVDDPYTYAWDVLAHPKYCGLRVEVKTHQTDSRWISVTTGCSGEYPYGSGINLGPILNHQVADCIIIFNTKEIHPGVIQYTPKFIGDREDLRKVVRKSNYNGWYLSI</sequence>
<name>END4_BPT4</name>
<protein>
    <recommendedName>
        <fullName evidence="3">Endonuclease IV</fullName>
        <ecNumber evidence="1">3.1.21.9</ecNumber>
    </recommendedName>
    <alternativeName>
        <fullName>Deoxyribonuclease IV</fullName>
    </alternativeName>
</protein>
<organism>
    <name type="scientific">Enterobacteria phage T4</name>
    <name type="common">Bacteriophage T4</name>
    <dbReference type="NCBI Taxonomy" id="10665"/>
    <lineage>
        <taxon>Viruses</taxon>
        <taxon>Duplodnaviria</taxon>
        <taxon>Heunggongvirae</taxon>
        <taxon>Uroviricota</taxon>
        <taxon>Caudoviricetes</taxon>
        <taxon>Straboviridae</taxon>
        <taxon>Tevenvirinae</taxon>
        <taxon>Tequatrovirus</taxon>
    </lineage>
</organism>
<reference key="1">
    <citation type="journal article" date="2003" name="Microbiol. Mol. Biol. Rev.">
        <title>Bacteriophage T4 genome.</title>
        <authorList>
            <person name="Miller E.S."/>
            <person name="Kutter E."/>
            <person name="Mosig G."/>
            <person name="Arisaka F."/>
            <person name="Kunisawa T."/>
            <person name="Ruger W."/>
        </authorList>
    </citation>
    <scope>NUCLEOTIDE SEQUENCE [LARGE SCALE GENOMIC DNA]</scope>
</reference>
<reference key="2">
    <citation type="journal article" date="2010" name="Virol. J.">
        <title>Genomes of the T4-related bacteriophages as windows on microbial genome evolution.</title>
        <authorList>
            <person name="Petrov V.M."/>
            <person name="Ratnayaka S."/>
            <person name="Nolan J.M."/>
            <person name="Miller E.S."/>
            <person name="Karam J.D."/>
        </authorList>
    </citation>
    <scope>NUCLEOTIDE SEQUENCE [LARGE SCALE GENOMIC DNA]</scope>
</reference>
<reference key="3">
    <citation type="journal article" date="2015" name="MBio">
        <title>Covalent Modification of Bacteriophage T4 DNA Inhibits CRISPR-Cas9.</title>
        <authorList>
            <person name="Bryson A.L."/>
            <person name="Hwang Y."/>
            <person name="Sherrill-Mix S."/>
            <person name="Wu G.D."/>
            <person name="Lewis J.D."/>
            <person name="Black L."/>
            <person name="Clark T.A."/>
            <person name="Bushman F.D."/>
        </authorList>
    </citation>
    <scope>NUCLEOTIDE SEQUENCE [LARGE SCALE GENOMIC DNA]</scope>
    <source>
        <strain evidence="6">147</strain>
        <strain evidence="5">Wild</strain>
    </source>
</reference>
<reference key="4">
    <citation type="journal article" date="2006" name="Nucleic Acids Res.">
        <title>Biochemical analysis of the substrate specificity and sequence preference of endonuclease IV from bacteriophage T4, a dC-specific endonuclease implicated in restriction of dC-substituted T4 DNA synthesis.</title>
        <authorList>
            <person name="Hirano N."/>
            <person name="Ohshima H."/>
            <person name="Takahashi H."/>
        </authorList>
    </citation>
    <scope>FUNCTION</scope>
    <scope>CATALYTIC ACTIVITY</scope>
</reference>
<reference key="5">
    <citation type="journal article" date="2007" name="Nucleic Acids Res.">
        <title>A hexanucleotide sequence (dC1-dC6 tract) restricts the dC-specific cleavage of single-stranded DNA by endonuclease IV of bacteriophage T4.</title>
        <authorList>
            <person name="Ohshima H."/>
            <person name="Hirano N."/>
            <person name="Takahashi H."/>
        </authorList>
    </citation>
    <scope>FUNCTION</scope>
</reference>
<feature type="chain" id="PRO_0000164933" description="Endonuclease IV">
    <location>
        <begin position="1"/>
        <end position="185"/>
    </location>
</feature>
<proteinExistence type="evidence at protein level"/>
<accession>P39250</accession>
<accession>D9IEV9</accession>
<comment type="function">
    <text evidence="1 2">Cleaves single-stranded DNA in a dC-specific manner. The cleavage occurs exclusively at the 5'-proximal position (dC1) within a dCs tract having a minimal size of 6 bases. These specific cleavages may have a detrimental effect on the replication of host dC-containing DNA.</text>
</comment>
<comment type="catalytic activity">
    <reaction evidence="1">
        <text>Endonucleolytic cleavage of the 5' phosphodiester bond of deoxycytidine in single-stranded DNA.</text>
        <dbReference type="EC" id="3.1.21.9"/>
    </reaction>
</comment>
<keyword id="KW-0255">Endonuclease</keyword>
<keyword id="KW-0378">Hydrolase</keyword>
<keyword id="KW-0540">Nuclease</keyword>
<keyword id="KW-1185">Reference proteome</keyword>
<dbReference type="EC" id="3.1.21.9" evidence="1"/>
<dbReference type="EMBL" id="AF158101">
    <property type="protein sequence ID" value="AAD42559.1"/>
    <property type="molecule type" value="Genomic_DNA"/>
</dbReference>
<dbReference type="EMBL" id="HM137666">
    <property type="protein sequence ID" value="ADJ39995.1"/>
    <property type="molecule type" value="Genomic_DNA"/>
</dbReference>
<dbReference type="EMBL" id="KJ477684">
    <property type="protein sequence ID" value="AHY83560.1"/>
    <property type="molecule type" value="Genomic_DNA"/>
</dbReference>
<dbReference type="EMBL" id="KJ477685">
    <property type="protein sequence ID" value="AHY83756.1"/>
    <property type="molecule type" value="Genomic_DNA"/>
</dbReference>
<dbReference type="RefSeq" id="NP_049887.1">
    <property type="nucleotide sequence ID" value="NC_000866.4"/>
</dbReference>
<dbReference type="SMR" id="P39250"/>
<dbReference type="GeneID" id="1258726"/>
<dbReference type="KEGG" id="vg:1258726"/>
<dbReference type="OrthoDB" id="13240at10239"/>
<dbReference type="Proteomes" id="UP000001092">
    <property type="component" value="Segment"/>
</dbReference>
<dbReference type="Proteomes" id="UP000009087">
    <property type="component" value="Segment"/>
</dbReference>
<dbReference type="Proteomes" id="UP000185270">
    <property type="component" value="Genome"/>
</dbReference>
<dbReference type="Proteomes" id="UP000185271">
    <property type="component" value="Genome"/>
</dbReference>
<dbReference type="GO" id="GO:0004519">
    <property type="term" value="F:endonuclease activity"/>
    <property type="evidence" value="ECO:0000314"/>
    <property type="project" value="UniProtKB"/>
</dbReference>
<evidence type="ECO:0000269" key="1">
    <source>
    </source>
</evidence>
<evidence type="ECO:0000269" key="2">
    <source>
    </source>
</evidence>
<evidence type="ECO:0000303" key="3">
    <source>
    </source>
</evidence>
<evidence type="ECO:0000312" key="4">
    <source>
        <dbReference type="EMBL" id="ADJ39995.1"/>
    </source>
</evidence>
<evidence type="ECO:0000312" key="5">
    <source>
        <dbReference type="EMBL" id="AHY83560.1"/>
    </source>
</evidence>
<evidence type="ECO:0000312" key="6">
    <source>
        <dbReference type="EMBL" id="AHY83756.1"/>
    </source>
</evidence>
<gene>
    <name type="primary">denB</name>
    <name evidence="6" type="ORF">T4147_276</name>
    <name evidence="4" type="ORF">T4Tp278</name>
    <name evidence="5" type="ORF">T4wild_276</name>
</gene>
<organismHost>
    <name type="scientific">Escherichia coli</name>
    <dbReference type="NCBI Taxonomy" id="562"/>
</organismHost>